<accession>Q27705</accession>
<name>PFP_NAEFO</name>
<reference key="1">
    <citation type="journal article" date="1995" name="Biochem. J.">
        <title>Cloning, sequencing and expression of the pyrophosphate-dependent phosphofructo-1-kinase from Naegleria fowleri.</title>
        <authorList>
            <person name="Wessberg K.L."/>
            <person name="Skolnick S."/>
            <person name="Xu J."/>
            <person name="Marciano-Cabral F."/>
            <person name="Kemp R.G."/>
        </authorList>
    </citation>
    <scope>NUCLEOTIDE SEQUENCE [MRNA]</scope>
    <source>
        <strain>LEE / ATCC 30894</strain>
    </source>
</reference>
<reference key="2">
    <citation type="journal article" date="1993" name="Biochem. J.">
        <title>Pyrophosphate-dependent phosphofructokinase from the amoeba Naegleria fowleri, an AMP-sensitive enzyme.</title>
        <authorList>
            <person name="Mertens E."/>
            <person name="De Jonckheere J."/>
            <person name="Van Schaftingen E."/>
        </authorList>
    </citation>
    <scope>FUNCTION</scope>
    <scope>SUBUNIT</scope>
    <scope>CATALYTIC ACTIVITY</scope>
    <scope>BIOPHYSICOCHEMICAL PROPERTIES</scope>
    <scope>COFACTOR</scope>
    <scope>ACTIVITY REGULATION</scope>
    <source>
        <strain>KUL</strain>
    </source>
</reference>
<dbReference type="EC" id="2.7.1.90" evidence="1"/>
<dbReference type="EMBL" id="U11733">
    <property type="protein sequence ID" value="AAA85791.1"/>
    <property type="molecule type" value="mRNA"/>
</dbReference>
<dbReference type="PIR" id="S54978">
    <property type="entry name" value="S54978"/>
</dbReference>
<dbReference type="SMR" id="Q27705"/>
<dbReference type="VEuPathDB" id="AmoebaDB:NF0074270"/>
<dbReference type="VEuPathDB" id="AmoebaDB:NfTy_073640"/>
<dbReference type="SABIO-RK" id="Q27705"/>
<dbReference type="UniPathway" id="UPA00109">
    <property type="reaction ID" value="UER00182"/>
</dbReference>
<dbReference type="GO" id="GO:0005829">
    <property type="term" value="C:cytosol"/>
    <property type="evidence" value="ECO:0007669"/>
    <property type="project" value="TreeGrafter"/>
</dbReference>
<dbReference type="GO" id="GO:0003872">
    <property type="term" value="F:6-phosphofructokinase activity"/>
    <property type="evidence" value="ECO:0007669"/>
    <property type="project" value="UniProtKB-UniRule"/>
</dbReference>
<dbReference type="GO" id="GO:0047334">
    <property type="term" value="F:diphosphate-fructose-6-phosphate 1-phosphotransferase activity"/>
    <property type="evidence" value="ECO:0007669"/>
    <property type="project" value="UniProtKB-EC"/>
</dbReference>
<dbReference type="GO" id="GO:0046872">
    <property type="term" value="F:metal ion binding"/>
    <property type="evidence" value="ECO:0007669"/>
    <property type="project" value="UniProtKB-KW"/>
</dbReference>
<dbReference type="GO" id="GO:0006002">
    <property type="term" value="P:fructose 6-phosphate metabolic process"/>
    <property type="evidence" value="ECO:0007669"/>
    <property type="project" value="InterPro"/>
</dbReference>
<dbReference type="GO" id="GO:0009749">
    <property type="term" value="P:response to glucose"/>
    <property type="evidence" value="ECO:0007669"/>
    <property type="project" value="TreeGrafter"/>
</dbReference>
<dbReference type="Gene3D" id="3.40.50.450">
    <property type="match status" value="1"/>
</dbReference>
<dbReference type="Gene3D" id="3.40.50.460">
    <property type="entry name" value="Phosphofructokinase domain"/>
    <property type="match status" value="1"/>
</dbReference>
<dbReference type="HAMAP" id="MF_01979">
    <property type="entry name" value="Phosphofructokinase_II_Short"/>
    <property type="match status" value="1"/>
</dbReference>
<dbReference type="InterPro" id="IPR022953">
    <property type="entry name" value="ATP_PFK"/>
</dbReference>
<dbReference type="InterPro" id="IPR054846">
    <property type="entry name" value="PFKA_PPi_Ttgales"/>
</dbReference>
<dbReference type="InterPro" id="IPR000023">
    <property type="entry name" value="Phosphofructokinase_dom"/>
</dbReference>
<dbReference type="InterPro" id="IPR035966">
    <property type="entry name" value="PKF_sf"/>
</dbReference>
<dbReference type="InterPro" id="IPR011403">
    <property type="entry name" value="PPi-PFK_TM0289"/>
</dbReference>
<dbReference type="NCBIfam" id="NF041103">
    <property type="entry name" value="PFKA_PPi_Ttgales"/>
    <property type="match status" value="1"/>
</dbReference>
<dbReference type="PANTHER" id="PTHR43650">
    <property type="entry name" value="PYROPHOSPHATE--FRUCTOSE 6-PHOSPHATE 1-PHOSPHOTRANSFERASE"/>
    <property type="match status" value="1"/>
</dbReference>
<dbReference type="PANTHER" id="PTHR43650:SF1">
    <property type="entry name" value="PYROPHOSPHATE--FRUCTOSE 6-PHOSPHATE 1-PHOSPHOTRANSFERASE SUBUNIT BETA 2"/>
    <property type="match status" value="1"/>
</dbReference>
<dbReference type="Pfam" id="PF00365">
    <property type="entry name" value="PFK"/>
    <property type="match status" value="1"/>
</dbReference>
<dbReference type="PIRSF" id="PIRSF036482">
    <property type="entry name" value="PPi_PFK_TM0289"/>
    <property type="match status" value="1"/>
</dbReference>
<dbReference type="PRINTS" id="PR00476">
    <property type="entry name" value="PHFRCTKINASE"/>
</dbReference>
<dbReference type="SUPFAM" id="SSF53784">
    <property type="entry name" value="Phosphofructokinase"/>
    <property type="match status" value="1"/>
</dbReference>
<comment type="function">
    <text evidence="1 2">Catalyzes the phosphorylation of D-fructose 6-phosphate, the first committing step of glycolysis. Uses inorganic phosphate (PPi) as phosphoryl donor instead of ATP like common ATP-dependent phosphofructokinases (ATP-PFKs), which renders the reaction reversible, and can thus function both in glycolysis and gluconeogenesis. Consistently, PPi-PFK can replace the enzymes of both the forward (ATP-PFK) and reverse (fructose-bisphosphatase (FBPase)) reactions.</text>
</comment>
<comment type="catalytic activity">
    <reaction evidence="1 2">
        <text>beta-D-fructose 6-phosphate + diphosphate = beta-D-fructose 1,6-bisphosphate + phosphate + H(+)</text>
        <dbReference type="Rhea" id="RHEA:13613"/>
        <dbReference type="ChEBI" id="CHEBI:15378"/>
        <dbReference type="ChEBI" id="CHEBI:32966"/>
        <dbReference type="ChEBI" id="CHEBI:33019"/>
        <dbReference type="ChEBI" id="CHEBI:43474"/>
        <dbReference type="ChEBI" id="CHEBI:57634"/>
        <dbReference type="EC" id="2.7.1.90"/>
    </reaction>
</comment>
<comment type="cofactor">
    <cofactor evidence="1 2">
        <name>Mg(2+)</name>
        <dbReference type="ChEBI" id="CHEBI:18420"/>
    </cofactor>
    <cofactor evidence="1 2">
        <name>Mn(2+)</name>
        <dbReference type="ChEBI" id="CHEBI:29035"/>
    </cofactor>
</comment>
<comment type="activity regulation">
    <text evidence="2">Activated by AMP. Probably promotes oligomerization of the enzyme.</text>
</comment>
<comment type="biophysicochemical properties">
    <kinetics>
        <KM evidence="2">590 uM for phosphate</KM>
        <KM evidence="2">15 uM for diphosphate</KM>
        <KM evidence="2">10 uM for fructose 6-phosphate</KM>
        <KM evidence="2">35 uM for fructose 1,6-bisphosphate</KM>
    </kinetics>
    <phDependence>
        <text evidence="2">Optimum pH is 6 for the forward reaction and 7.5 for the reverse reaction.</text>
    </phDependence>
</comment>
<comment type="pathway">
    <text evidence="1">Carbohydrate degradation; glycolysis; D-glyceraldehyde 3-phosphate and glycerone phosphate from D-glucose: step 3/4.</text>
</comment>
<comment type="subunit">
    <text evidence="1 2">Homotetramer.</text>
</comment>
<comment type="subcellular location">
    <subcellularLocation>
        <location evidence="1">Cytoplasm</location>
    </subcellularLocation>
</comment>
<comment type="similarity">
    <text evidence="1">Belongs to the phosphofructokinase type A (PFKA) family. PPi-dependent PFK group II subfamily. Clade 'Short' sub-subfamily.</text>
</comment>
<feature type="chain" id="PRO_0000429701" description="Pyrophosphate--fructose 6-phosphate 1-phosphotransferase">
    <location>
        <begin position="1"/>
        <end position="437"/>
    </location>
</feature>
<feature type="active site" description="Proton acceptor" evidence="1">
    <location>
        <position position="149"/>
    </location>
</feature>
<feature type="binding site" evidence="1">
    <location>
        <position position="27"/>
    </location>
    <ligand>
        <name>diphosphate</name>
        <dbReference type="ChEBI" id="CHEBI:33019"/>
    </ligand>
</feature>
<feature type="binding site" evidence="1">
    <location>
        <position position="122"/>
    </location>
    <ligand>
        <name>Mg(2+)</name>
        <dbReference type="ChEBI" id="CHEBI:18420"/>
        <note>catalytic</note>
    </ligand>
</feature>
<feature type="binding site" evidence="1">
    <location>
        <begin position="147"/>
        <end position="149"/>
    </location>
    <ligand>
        <name>substrate</name>
    </ligand>
</feature>
<feature type="binding site" evidence="1">
    <location>
        <begin position="193"/>
        <end position="195"/>
    </location>
    <ligand>
        <name>substrate</name>
    </ligand>
</feature>
<feature type="binding site" evidence="1">
    <location>
        <position position="261"/>
    </location>
    <ligand>
        <name>substrate</name>
    </ligand>
</feature>
<feature type="binding site" evidence="1">
    <location>
        <begin position="323"/>
        <end position="326"/>
    </location>
    <ligand>
        <name>substrate</name>
    </ligand>
</feature>
<feature type="site" description="Important for catalytic activity and substrate specificity; stabilizes the transition state when the phosphoryl donor is PPi; prevents ATP from binding by mimicking the alpha-phosphate group of ATP" evidence="1">
    <location>
        <position position="123"/>
    </location>
</feature>
<feature type="site" description="Important for catalytic activity; stabilizes the transition state when the phosphoryl donor is PPi" evidence="1">
    <location>
        <position position="146"/>
    </location>
</feature>
<sequence length="437" mass="48098">MLSSSHLPTTIVTPKNVPTLGVLVGGGPAPGINGVIGAVTIEAINNGYRVLGFLEGFQNLILQDDSKIVELTIDSVSRIHFEGGSILKTSRANPTKKQEDLQKVVKQLQKFNVSLLVTIGGDDTAFSSMSVAKAANNEIHVVTLPKTIDNDLPLPYGIPTFGYETAREFGANVVRNLMTDASTASRYFIVVAMGRQAGHLALGIGKSAGSHLTLIPEEFLPTTDSTEPEVTFSRICDMIEASIIKRLYTSKKDHGVIVLAEGLLEYMSTDELKQAFGSSLKYDAHDHIMLAELDFGRLVRDEMRERMNRRGLKIAFTEKNLGYELRCAPPNAFDREYTRDLGNGAVRYLLNGGNGALITVQGVKMVPLSFDDLKDPRTGKTRTRQVDVSSEGFQVAKRYMIRLEKKDFEKEETLKGLAATAKCSVEDFIKQFKYLVQ</sequence>
<proteinExistence type="evidence at protein level"/>
<keyword id="KW-0963">Cytoplasm</keyword>
<keyword id="KW-0324">Glycolysis</keyword>
<keyword id="KW-0418">Kinase</keyword>
<keyword id="KW-0460">Magnesium</keyword>
<keyword id="KW-0479">Metal-binding</keyword>
<keyword id="KW-0808">Transferase</keyword>
<protein>
    <recommendedName>
        <fullName evidence="1">Pyrophosphate--fructose 6-phosphate 1-phosphotransferase</fullName>
        <ecNumber evidence="1">2.7.1.90</ecNumber>
    </recommendedName>
    <alternativeName>
        <fullName evidence="1">6-phosphofructokinase, pyrophosphate dependent</fullName>
    </alternativeName>
    <alternativeName>
        <fullName evidence="1">PPi-dependent phosphofructokinase</fullName>
        <shortName evidence="1">PPi-PFK</shortName>
    </alternativeName>
    <alternativeName>
        <fullName evidence="1">Pyrophosphate-dependent 6-phosphofructose-1-kinase</fullName>
    </alternativeName>
</protein>
<evidence type="ECO:0000255" key="1">
    <source>
        <dbReference type="HAMAP-Rule" id="MF_01979"/>
    </source>
</evidence>
<evidence type="ECO:0000269" key="2">
    <source>
    </source>
</evidence>
<organism>
    <name type="scientific">Naegleria fowleri</name>
    <name type="common">Brain eating amoeba</name>
    <dbReference type="NCBI Taxonomy" id="5763"/>
    <lineage>
        <taxon>Eukaryota</taxon>
        <taxon>Discoba</taxon>
        <taxon>Heterolobosea</taxon>
        <taxon>Tetramitia</taxon>
        <taxon>Eutetramitia</taxon>
        <taxon>Vahlkampfiidae</taxon>
        <taxon>Naegleria</taxon>
    </lineage>
</organism>